<comment type="function">
    <text evidence="1">Chaperone involved in the maturation of iron-sulfur cluster-containing proteins. Has a low intrinsic ATPase activity which is markedly stimulated by HscB.</text>
</comment>
<comment type="similarity">
    <text evidence="1">Belongs to the heat shock protein 70 family.</text>
</comment>
<name>HSCA_ALIFM</name>
<feature type="chain" id="PRO_1000131697" description="Chaperone protein HscA homolog">
    <location>
        <begin position="1"/>
        <end position="616"/>
    </location>
</feature>
<keyword id="KW-0067">ATP-binding</keyword>
<keyword id="KW-0143">Chaperone</keyword>
<keyword id="KW-0547">Nucleotide-binding</keyword>
<sequence length="616" mass="65945">MLLQIAEPGQSAVPHQHKLAVGIDLGTTNSLVASVRSGEAKTLPDMKGNVILPSVVQYQEDKICVGMNAYQSAAMDPQNTIISVKRLMGRSLKDIQARYPELPYQFSESENGLPVIQTAQGEVNPIQVSSEILKSLSRRAQDTLGGELEGVVITVPAYFDDAQRAGTKDAATLAGLNVLRLLNEPTAAAIAYGLDSGQEGVIAVYDLGGGTFDISILRLSKGVFEVLATGGDSALGGDDFDHVLAQWIKEQAGITSSLSSQEQRELLTLATQTKVALSDSDNVKISFKDWSGEISVELFNSLIQPLIKKTLMACRRALKDADITSEEVMEVVMVGGSTRTPFVRTSVGDYFGQTPLTSIDPDQVVAIGAAIQADILVGNKPDSEMLLLDVIPLSLGIETMGGLVEKIIPRNTTIPVAKAQEFTTFKDGQTGMMVHVVQGEREMVEDGRSLARFSLKGIPPMAAGAAHIRVTYQVDADGLLSVTAMEKSTGVQSHIQVKPSYGLSDNEVANMLKDSMTYAKEDMQARALAEQQVEADRVIEGLVVALNNDGDALLSKEEQAEILQAIEALITLRQGTDAQAIEDGIKKADEASQEFAARRMDASIRAALAGQSIDEV</sequence>
<reference key="1">
    <citation type="submission" date="2008-08" db="EMBL/GenBank/DDBJ databases">
        <title>Complete sequence of Vibrio fischeri strain MJ11.</title>
        <authorList>
            <person name="Mandel M.J."/>
            <person name="Stabb E.V."/>
            <person name="Ruby E.G."/>
            <person name="Ferriera S."/>
            <person name="Johnson J."/>
            <person name="Kravitz S."/>
            <person name="Beeson K."/>
            <person name="Sutton G."/>
            <person name="Rogers Y.-H."/>
            <person name="Friedman R."/>
            <person name="Frazier M."/>
            <person name="Venter J.C."/>
        </authorList>
    </citation>
    <scope>NUCLEOTIDE SEQUENCE [LARGE SCALE GENOMIC DNA]</scope>
    <source>
        <strain>MJ11</strain>
    </source>
</reference>
<organism>
    <name type="scientific">Aliivibrio fischeri (strain MJ11)</name>
    <name type="common">Vibrio fischeri</name>
    <dbReference type="NCBI Taxonomy" id="388396"/>
    <lineage>
        <taxon>Bacteria</taxon>
        <taxon>Pseudomonadati</taxon>
        <taxon>Pseudomonadota</taxon>
        <taxon>Gammaproteobacteria</taxon>
        <taxon>Vibrionales</taxon>
        <taxon>Vibrionaceae</taxon>
        <taxon>Aliivibrio</taxon>
    </lineage>
</organism>
<evidence type="ECO:0000255" key="1">
    <source>
        <dbReference type="HAMAP-Rule" id="MF_00679"/>
    </source>
</evidence>
<dbReference type="EMBL" id="CP001139">
    <property type="protein sequence ID" value="ACH66849.1"/>
    <property type="molecule type" value="Genomic_DNA"/>
</dbReference>
<dbReference type="RefSeq" id="WP_012534025.1">
    <property type="nucleotide sequence ID" value="NC_011184.1"/>
</dbReference>
<dbReference type="SMR" id="B5FAW4"/>
<dbReference type="KEGG" id="vfm:VFMJ11_0635"/>
<dbReference type="HOGENOM" id="CLU_005965_2_1_6"/>
<dbReference type="Proteomes" id="UP000001857">
    <property type="component" value="Chromosome I"/>
</dbReference>
<dbReference type="GO" id="GO:0005524">
    <property type="term" value="F:ATP binding"/>
    <property type="evidence" value="ECO:0007669"/>
    <property type="project" value="UniProtKB-KW"/>
</dbReference>
<dbReference type="GO" id="GO:0016887">
    <property type="term" value="F:ATP hydrolysis activity"/>
    <property type="evidence" value="ECO:0007669"/>
    <property type="project" value="UniProtKB-UniRule"/>
</dbReference>
<dbReference type="GO" id="GO:0140662">
    <property type="term" value="F:ATP-dependent protein folding chaperone"/>
    <property type="evidence" value="ECO:0007669"/>
    <property type="project" value="InterPro"/>
</dbReference>
<dbReference type="GO" id="GO:0051082">
    <property type="term" value="F:unfolded protein binding"/>
    <property type="evidence" value="ECO:0007669"/>
    <property type="project" value="InterPro"/>
</dbReference>
<dbReference type="GO" id="GO:0016226">
    <property type="term" value="P:iron-sulfur cluster assembly"/>
    <property type="evidence" value="ECO:0007669"/>
    <property type="project" value="InterPro"/>
</dbReference>
<dbReference type="CDD" id="cd10236">
    <property type="entry name" value="ASKHA_NBD_HSP70_HscA"/>
    <property type="match status" value="1"/>
</dbReference>
<dbReference type="FunFam" id="3.30.420.40:FF:000046">
    <property type="entry name" value="Chaperone protein HscA"/>
    <property type="match status" value="1"/>
</dbReference>
<dbReference type="FunFam" id="2.60.34.10:FF:000005">
    <property type="entry name" value="Chaperone protein HscA homolog"/>
    <property type="match status" value="1"/>
</dbReference>
<dbReference type="FunFam" id="3.30.420.40:FF:000020">
    <property type="entry name" value="Chaperone protein HscA homolog"/>
    <property type="match status" value="1"/>
</dbReference>
<dbReference type="Gene3D" id="1.20.1270.10">
    <property type="match status" value="1"/>
</dbReference>
<dbReference type="Gene3D" id="3.30.420.40">
    <property type="match status" value="2"/>
</dbReference>
<dbReference type="Gene3D" id="3.90.640.10">
    <property type="entry name" value="Actin, Chain A, domain 4"/>
    <property type="match status" value="1"/>
</dbReference>
<dbReference type="Gene3D" id="2.60.34.10">
    <property type="entry name" value="Substrate Binding Domain Of DNAk, Chain A, domain 1"/>
    <property type="match status" value="1"/>
</dbReference>
<dbReference type="HAMAP" id="MF_00679">
    <property type="entry name" value="HscA"/>
    <property type="match status" value="1"/>
</dbReference>
<dbReference type="InterPro" id="IPR043129">
    <property type="entry name" value="ATPase_NBD"/>
</dbReference>
<dbReference type="InterPro" id="IPR018181">
    <property type="entry name" value="Heat_shock_70_CS"/>
</dbReference>
<dbReference type="InterPro" id="IPR042039">
    <property type="entry name" value="HscA_NBD"/>
</dbReference>
<dbReference type="InterPro" id="IPR029048">
    <property type="entry name" value="HSP70_C_sf"/>
</dbReference>
<dbReference type="InterPro" id="IPR029047">
    <property type="entry name" value="HSP70_peptide-bd_sf"/>
</dbReference>
<dbReference type="InterPro" id="IPR013126">
    <property type="entry name" value="Hsp_70_fam"/>
</dbReference>
<dbReference type="InterPro" id="IPR010236">
    <property type="entry name" value="ISC_FeS_clus_asmbl_HscA"/>
</dbReference>
<dbReference type="NCBIfam" id="TIGR01991">
    <property type="entry name" value="HscA"/>
    <property type="match status" value="1"/>
</dbReference>
<dbReference type="NCBIfam" id="NF003520">
    <property type="entry name" value="PRK05183.1"/>
    <property type="match status" value="1"/>
</dbReference>
<dbReference type="PANTHER" id="PTHR19375">
    <property type="entry name" value="HEAT SHOCK PROTEIN 70KDA"/>
    <property type="match status" value="1"/>
</dbReference>
<dbReference type="Pfam" id="PF00012">
    <property type="entry name" value="HSP70"/>
    <property type="match status" value="1"/>
</dbReference>
<dbReference type="PRINTS" id="PR00301">
    <property type="entry name" value="HEATSHOCK70"/>
</dbReference>
<dbReference type="SUPFAM" id="SSF53067">
    <property type="entry name" value="Actin-like ATPase domain"/>
    <property type="match status" value="2"/>
</dbReference>
<dbReference type="SUPFAM" id="SSF100934">
    <property type="entry name" value="Heat shock protein 70kD (HSP70), C-terminal subdomain"/>
    <property type="match status" value="1"/>
</dbReference>
<dbReference type="SUPFAM" id="SSF100920">
    <property type="entry name" value="Heat shock protein 70kD (HSP70), peptide-binding domain"/>
    <property type="match status" value="1"/>
</dbReference>
<dbReference type="PROSITE" id="PS00297">
    <property type="entry name" value="HSP70_1"/>
    <property type="match status" value="1"/>
</dbReference>
<dbReference type="PROSITE" id="PS00329">
    <property type="entry name" value="HSP70_2"/>
    <property type="match status" value="1"/>
</dbReference>
<protein>
    <recommendedName>
        <fullName evidence="1">Chaperone protein HscA homolog</fullName>
    </recommendedName>
</protein>
<proteinExistence type="inferred from homology"/>
<accession>B5FAW4</accession>
<gene>
    <name evidence="1" type="primary">hscA</name>
    <name type="ordered locus">VFMJ11_0635</name>
</gene>